<sequence length="55" mass="5887">MLYWALVFLVVAIIAGALGFGGIAGASAGIAQILFYIFLILLVVSLLFGLFRRAR</sequence>
<feature type="chain" id="PRO_0000256747" description="UPF0391 membrane protein Meso_3110">
    <location>
        <begin position="1"/>
        <end position="55"/>
    </location>
</feature>
<feature type="transmembrane region" description="Helical" evidence="1">
    <location>
        <begin position="4"/>
        <end position="24"/>
    </location>
</feature>
<feature type="transmembrane region" description="Helical" evidence="1">
    <location>
        <begin position="30"/>
        <end position="50"/>
    </location>
</feature>
<proteinExistence type="inferred from homology"/>
<keyword id="KW-1003">Cell membrane</keyword>
<keyword id="KW-0472">Membrane</keyword>
<keyword id="KW-0812">Transmembrane</keyword>
<keyword id="KW-1133">Transmembrane helix</keyword>
<gene>
    <name type="ordered locus">Meso_3110</name>
</gene>
<organism>
    <name type="scientific">Chelativorans sp. (strain BNC1)</name>
    <dbReference type="NCBI Taxonomy" id="266779"/>
    <lineage>
        <taxon>Bacteria</taxon>
        <taxon>Pseudomonadati</taxon>
        <taxon>Pseudomonadota</taxon>
        <taxon>Alphaproteobacteria</taxon>
        <taxon>Hyphomicrobiales</taxon>
        <taxon>Phyllobacteriaceae</taxon>
        <taxon>Chelativorans</taxon>
    </lineage>
</organism>
<dbReference type="EMBL" id="CP000390">
    <property type="protein sequence ID" value="ABG64482.1"/>
    <property type="molecule type" value="Genomic_DNA"/>
</dbReference>
<dbReference type="STRING" id="266779.Meso_3110"/>
<dbReference type="KEGG" id="mes:Meso_3110"/>
<dbReference type="eggNOG" id="COG5487">
    <property type="taxonomic scope" value="Bacteria"/>
</dbReference>
<dbReference type="HOGENOM" id="CLU_187346_1_0_5"/>
<dbReference type="GO" id="GO:0005886">
    <property type="term" value="C:plasma membrane"/>
    <property type="evidence" value="ECO:0007669"/>
    <property type="project" value="UniProtKB-SubCell"/>
</dbReference>
<dbReference type="HAMAP" id="MF_01361">
    <property type="entry name" value="UPF0391"/>
    <property type="match status" value="1"/>
</dbReference>
<dbReference type="InterPro" id="IPR009760">
    <property type="entry name" value="DUF1328"/>
</dbReference>
<dbReference type="NCBIfam" id="NF010226">
    <property type="entry name" value="PRK13682.1-1"/>
    <property type="match status" value="1"/>
</dbReference>
<dbReference type="NCBIfam" id="NF010228">
    <property type="entry name" value="PRK13682.1-3"/>
    <property type="match status" value="1"/>
</dbReference>
<dbReference type="NCBIfam" id="NF010229">
    <property type="entry name" value="PRK13682.1-4"/>
    <property type="match status" value="1"/>
</dbReference>
<dbReference type="Pfam" id="PF07043">
    <property type="entry name" value="DUF1328"/>
    <property type="match status" value="1"/>
</dbReference>
<dbReference type="PIRSF" id="PIRSF036466">
    <property type="entry name" value="UCP036466"/>
    <property type="match status" value="1"/>
</dbReference>
<accession>Q11DP3</accession>
<evidence type="ECO:0000255" key="1">
    <source>
        <dbReference type="HAMAP-Rule" id="MF_01361"/>
    </source>
</evidence>
<protein>
    <recommendedName>
        <fullName evidence="1">UPF0391 membrane protein Meso_3110</fullName>
    </recommendedName>
</protein>
<comment type="subcellular location">
    <subcellularLocation>
        <location evidence="1">Cell membrane</location>
        <topology evidence="1">Multi-pass membrane protein</topology>
    </subcellularLocation>
</comment>
<comment type="similarity">
    <text evidence="1">Belongs to the UPF0391 family.</text>
</comment>
<name>Y3110_CHESB</name>
<reference key="1">
    <citation type="submission" date="2006-06" db="EMBL/GenBank/DDBJ databases">
        <title>Complete sequence of chromosome of Mesorhizobium sp. BNC1.</title>
        <authorList>
            <consortium name="US DOE Joint Genome Institute"/>
            <person name="Copeland A."/>
            <person name="Lucas S."/>
            <person name="Lapidus A."/>
            <person name="Barry K."/>
            <person name="Detter J.C."/>
            <person name="Glavina del Rio T."/>
            <person name="Hammon N."/>
            <person name="Israni S."/>
            <person name="Dalin E."/>
            <person name="Tice H."/>
            <person name="Pitluck S."/>
            <person name="Chertkov O."/>
            <person name="Brettin T."/>
            <person name="Bruce D."/>
            <person name="Han C."/>
            <person name="Tapia R."/>
            <person name="Gilna P."/>
            <person name="Schmutz J."/>
            <person name="Larimer F."/>
            <person name="Land M."/>
            <person name="Hauser L."/>
            <person name="Kyrpides N."/>
            <person name="Mikhailova N."/>
            <person name="Richardson P."/>
        </authorList>
    </citation>
    <scope>NUCLEOTIDE SEQUENCE [LARGE SCALE GENOMIC DNA]</scope>
    <source>
        <strain>BNC1</strain>
    </source>
</reference>